<feature type="chain" id="PRO_0000074701" description="Sensor protein BasS">
    <location>
        <begin position="1"/>
        <end position="363"/>
    </location>
</feature>
<feature type="topological domain" description="Cytoplasmic" evidence="2">
    <location>
        <begin position="1"/>
        <end position="13"/>
    </location>
</feature>
<feature type="transmembrane region" description="Helical" evidence="2">
    <location>
        <begin position="14"/>
        <end position="34"/>
    </location>
</feature>
<feature type="topological domain" description="Periplasmic" evidence="2">
    <location>
        <begin position="35"/>
        <end position="64"/>
    </location>
</feature>
<feature type="transmembrane region" description="Helical" evidence="2">
    <location>
        <begin position="65"/>
        <end position="88"/>
    </location>
</feature>
<feature type="topological domain" description="Cytoplasmic" evidence="2">
    <location>
        <begin position="89"/>
        <end position="363"/>
    </location>
</feature>
<feature type="domain" description="HAMP" evidence="3">
    <location>
        <begin position="89"/>
        <end position="141"/>
    </location>
</feature>
<feature type="domain" description="Histidine kinase" evidence="4">
    <location>
        <begin position="149"/>
        <end position="357"/>
    </location>
</feature>
<feature type="modified residue" description="Phosphohistidine; by autocatalysis" evidence="4">
    <location>
        <position position="152"/>
    </location>
</feature>
<protein>
    <recommendedName>
        <fullName>Sensor protein BasS</fullName>
        <ecNumber>2.7.13.3</ecNumber>
    </recommendedName>
</protein>
<gene>
    <name type="primary">basS</name>
    <name type="synonym">pmrB</name>
    <name type="ordered locus">b4112</name>
    <name type="ordered locus">JW4073</name>
</gene>
<organism>
    <name type="scientific">Escherichia coli (strain K12)</name>
    <dbReference type="NCBI Taxonomy" id="83333"/>
    <lineage>
        <taxon>Bacteria</taxon>
        <taxon>Pseudomonadati</taxon>
        <taxon>Pseudomonadota</taxon>
        <taxon>Gammaproteobacteria</taxon>
        <taxon>Enterobacterales</taxon>
        <taxon>Enterobacteriaceae</taxon>
        <taxon>Escherichia</taxon>
    </lineage>
</organism>
<name>BASS_ECOLI</name>
<comment type="function">
    <text evidence="5">Member of the two-component regulatory system BasS/BasR Autophosphorylates and activates BasR by phosphorylation.</text>
</comment>
<comment type="catalytic activity">
    <reaction>
        <text>ATP + protein L-histidine = ADP + protein N-phospho-L-histidine.</text>
        <dbReference type="EC" id="2.7.13.3"/>
    </reaction>
</comment>
<comment type="subcellular location">
    <subcellularLocation>
        <location>Cell inner membrane</location>
        <topology>Multi-pass membrane protein</topology>
    </subcellularLocation>
</comment>
<comment type="induction">
    <text evidence="1">The eptA-basRS operon is positively autoregulated by BasR under high iron or aluminum concentration conditions.</text>
</comment>
<comment type="PTM">
    <text>Autophosphorylated.</text>
</comment>
<reference key="1">
    <citation type="journal article" date="1993" name="J. Biochem.">
        <title>Novel members of the two-component signal transduction genes in Escherichia coli.</title>
        <authorList>
            <person name="Nagasawa S."/>
            <person name="Ishige K."/>
            <person name="Mizuno T."/>
        </authorList>
    </citation>
    <scope>NUCLEOTIDE SEQUENCE [GENOMIC DNA]</scope>
    <source>
        <strain>K12</strain>
    </source>
</reference>
<reference key="2">
    <citation type="journal article" date="1995" name="Nucleic Acids Res.">
        <title>Analysis of the Escherichia coli genome VI: DNA sequence of the region from 92.8 through 100 minutes.</title>
        <authorList>
            <person name="Burland V.D."/>
            <person name="Plunkett G. III"/>
            <person name="Sofia H.J."/>
            <person name="Daniels D.L."/>
            <person name="Blattner F.R."/>
        </authorList>
    </citation>
    <scope>NUCLEOTIDE SEQUENCE [LARGE SCALE GENOMIC DNA]</scope>
    <source>
        <strain>K12 / MG1655 / ATCC 47076</strain>
    </source>
</reference>
<reference key="3">
    <citation type="journal article" date="1997" name="Science">
        <title>The complete genome sequence of Escherichia coli K-12.</title>
        <authorList>
            <person name="Blattner F.R."/>
            <person name="Plunkett G. III"/>
            <person name="Bloch C.A."/>
            <person name="Perna N.T."/>
            <person name="Burland V."/>
            <person name="Riley M."/>
            <person name="Collado-Vides J."/>
            <person name="Glasner J.D."/>
            <person name="Rode C.K."/>
            <person name="Mayhew G.F."/>
            <person name="Gregor J."/>
            <person name="Davis N.W."/>
            <person name="Kirkpatrick H.A."/>
            <person name="Goeden M.A."/>
            <person name="Rose D.J."/>
            <person name="Mau B."/>
            <person name="Shao Y."/>
        </authorList>
    </citation>
    <scope>NUCLEOTIDE SEQUENCE [LARGE SCALE GENOMIC DNA]</scope>
    <source>
        <strain>K12 / MG1655 / ATCC 47076</strain>
    </source>
</reference>
<reference key="4">
    <citation type="journal article" date="2006" name="Mol. Syst. Biol.">
        <title>Highly accurate genome sequences of Escherichia coli K-12 strains MG1655 and W3110.</title>
        <authorList>
            <person name="Hayashi K."/>
            <person name="Morooka N."/>
            <person name="Yamamoto Y."/>
            <person name="Fujita K."/>
            <person name="Isono K."/>
            <person name="Choi S."/>
            <person name="Ohtsubo E."/>
            <person name="Baba T."/>
            <person name="Wanner B.L."/>
            <person name="Mori H."/>
            <person name="Horiuchi T."/>
        </authorList>
    </citation>
    <scope>NUCLEOTIDE SEQUENCE [LARGE SCALE GENOMIC DNA]</scope>
    <source>
        <strain>K12 / W3110 / ATCC 27325 / DSM 5911</strain>
    </source>
</reference>
<reference key="5">
    <citation type="journal article" date="2005" name="J. Biol. Chem.">
        <title>Functional characterization in vitro of all two-component signal transduction systems from Escherichia coli.</title>
        <authorList>
            <person name="Yamamoto K."/>
            <person name="Hirao K."/>
            <person name="Oshima T."/>
            <person name="Aiba H."/>
            <person name="Utsumi R."/>
            <person name="Ishihama A."/>
        </authorList>
    </citation>
    <scope>FUNCTION</scope>
    <scope>AUTOPHOSPHORYLATION</scope>
    <source>
        <strain>K12 / W3110 / ATCC 27325 / DSM 5911</strain>
    </source>
</reference>
<reference key="6">
    <citation type="journal article" date="2005" name="Science">
        <title>Global topology analysis of the Escherichia coli inner membrane proteome.</title>
        <authorList>
            <person name="Daley D.O."/>
            <person name="Rapp M."/>
            <person name="Granseth E."/>
            <person name="Melen K."/>
            <person name="Drew D."/>
            <person name="von Heijne G."/>
        </authorList>
    </citation>
    <scope>TOPOLOGY [LARGE SCALE ANALYSIS]</scope>
    <source>
        <strain>K12 / MG1655 / ATCC 47076</strain>
    </source>
</reference>
<keyword id="KW-0067">ATP-binding</keyword>
<keyword id="KW-0997">Cell inner membrane</keyword>
<keyword id="KW-1003">Cell membrane</keyword>
<keyword id="KW-0418">Kinase</keyword>
<keyword id="KW-0472">Membrane</keyword>
<keyword id="KW-0547">Nucleotide-binding</keyword>
<keyword id="KW-0597">Phosphoprotein</keyword>
<keyword id="KW-1185">Reference proteome</keyword>
<keyword id="KW-0808">Transferase</keyword>
<keyword id="KW-0812">Transmembrane</keyword>
<keyword id="KW-1133">Transmembrane helix</keyword>
<keyword id="KW-0902">Two-component regulatory system</keyword>
<evidence type="ECO:0000250" key="1"/>
<evidence type="ECO:0000255" key="2"/>
<evidence type="ECO:0000255" key="3">
    <source>
        <dbReference type="PROSITE-ProRule" id="PRU00102"/>
    </source>
</evidence>
<evidence type="ECO:0000255" key="4">
    <source>
        <dbReference type="PROSITE-ProRule" id="PRU00107"/>
    </source>
</evidence>
<evidence type="ECO:0000269" key="5">
    <source>
    </source>
</evidence>
<sequence length="363" mass="41029">MHFLRRPISLRQRLILTIGAILLVFELISVFWLWHESTEQIQLFEQALRDNRNNDRHIMREIREAVASLIVPGVFMVSLTLFICYQAVRRITRPLAELQKELEARTADNLTPIAIHSATLEIEAVVSALNDLVSRLTSTLDNERLFTADVAHELRTPLAGVRLHLELLAKTHHIDVAPLVARLDQMMESVSQLLQLARAGQSFSSGNYQHVKLLEDVILPSYDELSTMLDQRQQTLLLPESAADITVQGDATLLRMLLRNLVENAHRYSPQGSNIMIKLQEDDGAVMAVEDEGPGIDESKCGELSKAFVRMDSRYGGIGLGLSIVSRITQLHHGQFFLQNRQETSGTRAWVRLKKDQYVANQI</sequence>
<dbReference type="EC" id="2.7.13.3"/>
<dbReference type="EMBL" id="D14055">
    <property type="protein sequence ID" value="BAA03144.1"/>
    <property type="molecule type" value="Genomic_DNA"/>
</dbReference>
<dbReference type="EMBL" id="U14003">
    <property type="protein sequence ID" value="AAA97011.1"/>
    <property type="molecule type" value="Genomic_DNA"/>
</dbReference>
<dbReference type="EMBL" id="U00096">
    <property type="protein sequence ID" value="AAC77073.1"/>
    <property type="molecule type" value="Genomic_DNA"/>
</dbReference>
<dbReference type="EMBL" id="AP009048">
    <property type="protein sequence ID" value="BAE78114.1"/>
    <property type="molecule type" value="Genomic_DNA"/>
</dbReference>
<dbReference type="PIR" id="JX0285">
    <property type="entry name" value="JX0285"/>
</dbReference>
<dbReference type="RefSeq" id="NP_418536.1">
    <property type="nucleotide sequence ID" value="NC_000913.3"/>
</dbReference>
<dbReference type="SMR" id="P30844"/>
<dbReference type="BioGRID" id="4263084">
    <property type="interactions" value="7"/>
</dbReference>
<dbReference type="DIP" id="DIP-9202N"/>
<dbReference type="FunCoup" id="P30844">
    <property type="interactions" value="298"/>
</dbReference>
<dbReference type="IntAct" id="P30844">
    <property type="interactions" value="4"/>
</dbReference>
<dbReference type="STRING" id="511145.b4112"/>
<dbReference type="jPOST" id="P30844"/>
<dbReference type="PaxDb" id="511145-b4112"/>
<dbReference type="EnsemblBacteria" id="AAC77073">
    <property type="protein sequence ID" value="AAC77073"/>
    <property type="gene ID" value="b4112"/>
</dbReference>
<dbReference type="GeneID" id="948632"/>
<dbReference type="KEGG" id="ecj:JW4073"/>
<dbReference type="KEGG" id="eco:b4112"/>
<dbReference type="KEGG" id="ecoc:C3026_22220"/>
<dbReference type="PATRIC" id="fig|83333.103.peg.419"/>
<dbReference type="EchoBASE" id="EB1571"/>
<dbReference type="eggNOG" id="COG0642">
    <property type="taxonomic scope" value="Bacteria"/>
</dbReference>
<dbReference type="HOGENOM" id="CLU_000445_89_37_6"/>
<dbReference type="InParanoid" id="P30844"/>
<dbReference type="OMA" id="QLISVFW"/>
<dbReference type="OrthoDB" id="9809766at2"/>
<dbReference type="PhylomeDB" id="P30844"/>
<dbReference type="BioCyc" id="EcoCyc:BASS-MONOMER"/>
<dbReference type="BioCyc" id="MetaCyc:BASS-MONOMER"/>
<dbReference type="BRENDA" id="2.7.13.3">
    <property type="organism ID" value="2026"/>
</dbReference>
<dbReference type="PRO" id="PR:P30844"/>
<dbReference type="Proteomes" id="UP000000625">
    <property type="component" value="Chromosome"/>
</dbReference>
<dbReference type="GO" id="GO:0005886">
    <property type="term" value="C:plasma membrane"/>
    <property type="evidence" value="ECO:0000314"/>
    <property type="project" value="EcoCyc"/>
</dbReference>
<dbReference type="GO" id="GO:0005524">
    <property type="term" value="F:ATP binding"/>
    <property type="evidence" value="ECO:0007669"/>
    <property type="project" value="UniProtKB-KW"/>
</dbReference>
<dbReference type="GO" id="GO:0004721">
    <property type="term" value="F:phosphoprotein phosphatase activity"/>
    <property type="evidence" value="ECO:0000314"/>
    <property type="project" value="EcoCyc"/>
</dbReference>
<dbReference type="GO" id="GO:0000155">
    <property type="term" value="F:phosphorelay sensor kinase activity"/>
    <property type="evidence" value="ECO:0000314"/>
    <property type="project" value="EcoCyc"/>
</dbReference>
<dbReference type="GO" id="GO:0004673">
    <property type="term" value="F:protein histidine kinase activity"/>
    <property type="evidence" value="ECO:0000314"/>
    <property type="project" value="EcoCyc"/>
</dbReference>
<dbReference type="GO" id="GO:0000160">
    <property type="term" value="P:phosphorelay signal transduction system"/>
    <property type="evidence" value="ECO:0000318"/>
    <property type="project" value="GO_Central"/>
</dbReference>
<dbReference type="GO" id="GO:0010041">
    <property type="term" value="P:response to iron(III) ion"/>
    <property type="evidence" value="ECO:0000314"/>
    <property type="project" value="EcoCyc"/>
</dbReference>
<dbReference type="GO" id="GO:0010043">
    <property type="term" value="P:response to zinc ion"/>
    <property type="evidence" value="ECO:0000270"/>
    <property type="project" value="EcoCyc"/>
</dbReference>
<dbReference type="GO" id="GO:0007165">
    <property type="term" value="P:signal transduction"/>
    <property type="evidence" value="ECO:0000314"/>
    <property type="project" value="EcoCyc"/>
</dbReference>
<dbReference type="CDD" id="cd16940">
    <property type="entry name" value="HATPase_BasS-like"/>
    <property type="match status" value="1"/>
</dbReference>
<dbReference type="CDD" id="cd00082">
    <property type="entry name" value="HisKA"/>
    <property type="match status" value="1"/>
</dbReference>
<dbReference type="FunFam" id="1.10.287.130:FF:000026">
    <property type="entry name" value="Two-component system sensor histidine kinase PmrB"/>
    <property type="match status" value="1"/>
</dbReference>
<dbReference type="Gene3D" id="1.10.287.130">
    <property type="match status" value="1"/>
</dbReference>
<dbReference type="Gene3D" id="6.10.340.10">
    <property type="match status" value="1"/>
</dbReference>
<dbReference type="Gene3D" id="3.30.565.10">
    <property type="entry name" value="Histidine kinase-like ATPase, C-terminal domain"/>
    <property type="match status" value="1"/>
</dbReference>
<dbReference type="InterPro" id="IPR003660">
    <property type="entry name" value="HAMP_dom"/>
</dbReference>
<dbReference type="InterPro" id="IPR036890">
    <property type="entry name" value="HATPase_C_sf"/>
</dbReference>
<dbReference type="InterPro" id="IPR005467">
    <property type="entry name" value="His_kinase_dom"/>
</dbReference>
<dbReference type="InterPro" id="IPR003661">
    <property type="entry name" value="HisK_dim/P_dom"/>
</dbReference>
<dbReference type="InterPro" id="IPR036097">
    <property type="entry name" value="HisK_dim/P_sf"/>
</dbReference>
<dbReference type="InterPro" id="IPR004358">
    <property type="entry name" value="Sig_transdc_His_kin-like_C"/>
</dbReference>
<dbReference type="InterPro" id="IPR050428">
    <property type="entry name" value="TCS_sensor_his_kinase"/>
</dbReference>
<dbReference type="NCBIfam" id="NF008025">
    <property type="entry name" value="PRK10755.1"/>
    <property type="match status" value="1"/>
</dbReference>
<dbReference type="PANTHER" id="PTHR45436">
    <property type="entry name" value="SENSOR HISTIDINE KINASE YKOH"/>
    <property type="match status" value="1"/>
</dbReference>
<dbReference type="PANTHER" id="PTHR45436:SF7">
    <property type="entry name" value="SENSOR PROTEIN BASS"/>
    <property type="match status" value="1"/>
</dbReference>
<dbReference type="Pfam" id="PF02518">
    <property type="entry name" value="HATPase_c"/>
    <property type="match status" value="1"/>
</dbReference>
<dbReference type="Pfam" id="PF00512">
    <property type="entry name" value="HisKA"/>
    <property type="match status" value="1"/>
</dbReference>
<dbReference type="PRINTS" id="PR00344">
    <property type="entry name" value="BCTRLSENSOR"/>
</dbReference>
<dbReference type="SMART" id="SM00304">
    <property type="entry name" value="HAMP"/>
    <property type="match status" value="1"/>
</dbReference>
<dbReference type="SMART" id="SM00387">
    <property type="entry name" value="HATPase_c"/>
    <property type="match status" value="1"/>
</dbReference>
<dbReference type="SMART" id="SM00388">
    <property type="entry name" value="HisKA"/>
    <property type="match status" value="1"/>
</dbReference>
<dbReference type="SUPFAM" id="SSF55874">
    <property type="entry name" value="ATPase domain of HSP90 chaperone/DNA topoisomerase II/histidine kinase"/>
    <property type="match status" value="1"/>
</dbReference>
<dbReference type="SUPFAM" id="SSF47384">
    <property type="entry name" value="Homodimeric domain of signal transducing histidine kinase"/>
    <property type="match status" value="1"/>
</dbReference>
<dbReference type="PROSITE" id="PS50885">
    <property type="entry name" value="HAMP"/>
    <property type="match status" value="1"/>
</dbReference>
<dbReference type="PROSITE" id="PS50109">
    <property type="entry name" value="HIS_KIN"/>
    <property type="match status" value="1"/>
</dbReference>
<accession>P30844</accession>
<accession>Q2M6J2</accession>
<proteinExistence type="evidence at protein level"/>